<gene>
    <name evidence="1" type="primary">rplC</name>
    <name type="ordered locus">CCA_00093</name>
</gene>
<dbReference type="EMBL" id="AE015925">
    <property type="protein sequence ID" value="AAP04845.1"/>
    <property type="molecule type" value="Genomic_DNA"/>
</dbReference>
<dbReference type="RefSeq" id="WP_011006066.1">
    <property type="nucleotide sequence ID" value="NC_003361.3"/>
</dbReference>
<dbReference type="SMR" id="Q824Q1"/>
<dbReference type="STRING" id="227941.CCA_00093"/>
<dbReference type="KEGG" id="cca:CCA_00093"/>
<dbReference type="eggNOG" id="COG0087">
    <property type="taxonomic scope" value="Bacteria"/>
</dbReference>
<dbReference type="HOGENOM" id="CLU_044142_4_1_0"/>
<dbReference type="OrthoDB" id="9806135at2"/>
<dbReference type="Proteomes" id="UP000002193">
    <property type="component" value="Chromosome"/>
</dbReference>
<dbReference type="GO" id="GO:0022625">
    <property type="term" value="C:cytosolic large ribosomal subunit"/>
    <property type="evidence" value="ECO:0007669"/>
    <property type="project" value="TreeGrafter"/>
</dbReference>
<dbReference type="GO" id="GO:0019843">
    <property type="term" value="F:rRNA binding"/>
    <property type="evidence" value="ECO:0007669"/>
    <property type="project" value="UniProtKB-UniRule"/>
</dbReference>
<dbReference type="GO" id="GO:0003735">
    <property type="term" value="F:structural constituent of ribosome"/>
    <property type="evidence" value="ECO:0007669"/>
    <property type="project" value="InterPro"/>
</dbReference>
<dbReference type="GO" id="GO:0006412">
    <property type="term" value="P:translation"/>
    <property type="evidence" value="ECO:0007669"/>
    <property type="project" value="UniProtKB-UniRule"/>
</dbReference>
<dbReference type="FunFam" id="2.40.30.10:FF:000004">
    <property type="entry name" value="50S ribosomal protein L3"/>
    <property type="match status" value="1"/>
</dbReference>
<dbReference type="Gene3D" id="3.30.160.810">
    <property type="match status" value="1"/>
</dbReference>
<dbReference type="Gene3D" id="2.40.30.10">
    <property type="entry name" value="Translation factors"/>
    <property type="match status" value="1"/>
</dbReference>
<dbReference type="HAMAP" id="MF_01325_B">
    <property type="entry name" value="Ribosomal_uL3_B"/>
    <property type="match status" value="1"/>
</dbReference>
<dbReference type="InterPro" id="IPR000597">
    <property type="entry name" value="Ribosomal_uL3"/>
</dbReference>
<dbReference type="InterPro" id="IPR019927">
    <property type="entry name" value="Ribosomal_uL3_bac/org-type"/>
</dbReference>
<dbReference type="InterPro" id="IPR019926">
    <property type="entry name" value="Ribosomal_uL3_CS"/>
</dbReference>
<dbReference type="InterPro" id="IPR009000">
    <property type="entry name" value="Transl_B-barrel_sf"/>
</dbReference>
<dbReference type="NCBIfam" id="TIGR03625">
    <property type="entry name" value="L3_bact"/>
    <property type="match status" value="1"/>
</dbReference>
<dbReference type="PANTHER" id="PTHR11229">
    <property type="entry name" value="50S RIBOSOMAL PROTEIN L3"/>
    <property type="match status" value="1"/>
</dbReference>
<dbReference type="PANTHER" id="PTHR11229:SF16">
    <property type="entry name" value="LARGE RIBOSOMAL SUBUNIT PROTEIN UL3C"/>
    <property type="match status" value="1"/>
</dbReference>
<dbReference type="Pfam" id="PF00297">
    <property type="entry name" value="Ribosomal_L3"/>
    <property type="match status" value="1"/>
</dbReference>
<dbReference type="SUPFAM" id="SSF50447">
    <property type="entry name" value="Translation proteins"/>
    <property type="match status" value="1"/>
</dbReference>
<dbReference type="PROSITE" id="PS00474">
    <property type="entry name" value="RIBOSOMAL_L3"/>
    <property type="match status" value="1"/>
</dbReference>
<comment type="function">
    <text evidence="1">One of the primary rRNA binding proteins, it binds directly near the 3'-end of the 23S rRNA, where it nucleates assembly of the 50S subunit.</text>
</comment>
<comment type="subunit">
    <text evidence="1">Part of the 50S ribosomal subunit. Forms a cluster with proteins L14 and L19.</text>
</comment>
<comment type="similarity">
    <text evidence="1">Belongs to the universal ribosomal protein uL3 family.</text>
</comment>
<keyword id="KW-0687">Ribonucleoprotein</keyword>
<keyword id="KW-0689">Ribosomal protein</keyword>
<keyword id="KW-0694">RNA-binding</keyword>
<keyword id="KW-0699">rRNA-binding</keyword>
<name>RL3_CHLCV</name>
<accession>Q824Q1</accession>
<sequence>MRSQLSLMGKKEGMIHVFDKDGNLVACSVISVGSNVVTQIKVDSTDGYNAIQMGANEINVPEKTLEKRMNKPELGHLKKSGSRVFGLLKEVRLSEDAINEVSLGNEFGLEVLEDISSVDISGVSKGKGFQGVMKRFGFRGGPKTHGSGFHRHAGSIGMRSTPGRCFPGSKRPSHMGTVNVTVKNLEVVKIDLEKKVLLVKGAIPGPRGSVVVIRRSSRAKG</sequence>
<protein>
    <recommendedName>
        <fullName evidence="1">Large ribosomal subunit protein uL3</fullName>
    </recommendedName>
    <alternativeName>
        <fullName evidence="3">50S ribosomal protein L3</fullName>
    </alternativeName>
</protein>
<evidence type="ECO:0000255" key="1">
    <source>
        <dbReference type="HAMAP-Rule" id="MF_01325"/>
    </source>
</evidence>
<evidence type="ECO:0000256" key="2">
    <source>
        <dbReference type="SAM" id="MobiDB-lite"/>
    </source>
</evidence>
<evidence type="ECO:0000305" key="3"/>
<organism>
    <name type="scientific">Chlamydia caviae (strain ATCC VR-813 / DSM 19441 / 03DC25 / GPIC)</name>
    <name type="common">Chlamydophila caviae</name>
    <dbReference type="NCBI Taxonomy" id="227941"/>
    <lineage>
        <taxon>Bacteria</taxon>
        <taxon>Pseudomonadati</taxon>
        <taxon>Chlamydiota</taxon>
        <taxon>Chlamydiia</taxon>
        <taxon>Chlamydiales</taxon>
        <taxon>Chlamydiaceae</taxon>
        <taxon>Chlamydia/Chlamydophila group</taxon>
        <taxon>Chlamydia</taxon>
    </lineage>
</organism>
<feature type="chain" id="PRO_0000077084" description="Large ribosomal subunit protein uL3">
    <location>
        <begin position="1"/>
        <end position="221"/>
    </location>
</feature>
<feature type="region of interest" description="Disordered" evidence="2">
    <location>
        <begin position="140"/>
        <end position="160"/>
    </location>
</feature>
<reference key="1">
    <citation type="journal article" date="2003" name="Nucleic Acids Res.">
        <title>Genome sequence of Chlamydophila caviae (Chlamydia psittaci GPIC): examining the role of niche-specific genes in the evolution of the Chlamydiaceae.</title>
        <authorList>
            <person name="Read T.D."/>
            <person name="Myers G.S.A."/>
            <person name="Brunham R.C."/>
            <person name="Nelson W.C."/>
            <person name="Paulsen I.T."/>
            <person name="Heidelberg J.F."/>
            <person name="Holtzapple E.K."/>
            <person name="Khouri H.M."/>
            <person name="Federova N.B."/>
            <person name="Carty H.A."/>
            <person name="Umayam L.A."/>
            <person name="Haft D.H."/>
            <person name="Peterson J.D."/>
            <person name="Beanan M.J."/>
            <person name="White O."/>
            <person name="Salzberg S.L."/>
            <person name="Hsia R.-C."/>
            <person name="McClarty G."/>
            <person name="Rank R.G."/>
            <person name="Bavoil P.M."/>
            <person name="Fraser C.M."/>
        </authorList>
    </citation>
    <scope>NUCLEOTIDE SEQUENCE [LARGE SCALE GENOMIC DNA]</scope>
    <source>
        <strain>ATCC VR-813 / DSM 19441 / 03DC25 / GPIC</strain>
    </source>
</reference>
<proteinExistence type="inferred from homology"/>